<organism>
    <name type="scientific">Parasynechococcus marenigrum (strain WH8102)</name>
    <dbReference type="NCBI Taxonomy" id="84588"/>
    <lineage>
        <taxon>Bacteria</taxon>
        <taxon>Bacillati</taxon>
        <taxon>Cyanobacteriota</taxon>
        <taxon>Cyanophyceae</taxon>
        <taxon>Synechococcales</taxon>
        <taxon>Prochlorococcaceae</taxon>
        <taxon>Parasynechococcus</taxon>
        <taxon>Parasynechococcus marenigrum</taxon>
    </lineage>
</organism>
<dbReference type="EMBL" id="BX569693">
    <property type="protein sequence ID" value="CAE08018.1"/>
    <property type="status" value="ALT_INIT"/>
    <property type="molecule type" value="Genomic_DNA"/>
</dbReference>
<dbReference type="RefSeq" id="WP_042503620.1">
    <property type="nucleotide sequence ID" value="NC_005070.1"/>
</dbReference>
<dbReference type="SMR" id="Q7U637"/>
<dbReference type="STRING" id="84588.SYNW1503"/>
<dbReference type="KEGG" id="syw:SYNW1503"/>
<dbReference type="eggNOG" id="COG0542">
    <property type="taxonomic scope" value="Bacteria"/>
</dbReference>
<dbReference type="HOGENOM" id="CLU_005070_4_0_3"/>
<dbReference type="Proteomes" id="UP000001422">
    <property type="component" value="Chromosome"/>
</dbReference>
<dbReference type="GO" id="GO:0005737">
    <property type="term" value="C:cytoplasm"/>
    <property type="evidence" value="ECO:0007669"/>
    <property type="project" value="UniProtKB-SubCell"/>
</dbReference>
<dbReference type="GO" id="GO:0005524">
    <property type="term" value="F:ATP binding"/>
    <property type="evidence" value="ECO:0007669"/>
    <property type="project" value="UniProtKB-KW"/>
</dbReference>
<dbReference type="GO" id="GO:0016887">
    <property type="term" value="F:ATP hydrolysis activity"/>
    <property type="evidence" value="ECO:0007669"/>
    <property type="project" value="InterPro"/>
</dbReference>
<dbReference type="GO" id="GO:0034605">
    <property type="term" value="P:cellular response to heat"/>
    <property type="evidence" value="ECO:0007669"/>
    <property type="project" value="TreeGrafter"/>
</dbReference>
<dbReference type="GO" id="GO:0042026">
    <property type="term" value="P:protein refolding"/>
    <property type="evidence" value="ECO:0007669"/>
    <property type="project" value="InterPro"/>
</dbReference>
<dbReference type="CDD" id="cd00009">
    <property type="entry name" value="AAA"/>
    <property type="match status" value="1"/>
</dbReference>
<dbReference type="CDD" id="cd19499">
    <property type="entry name" value="RecA-like_ClpB_Hsp104-like"/>
    <property type="match status" value="1"/>
</dbReference>
<dbReference type="FunFam" id="1.10.8.60:FF:000017">
    <property type="entry name" value="ATP-dependent chaperone ClpB"/>
    <property type="match status" value="1"/>
</dbReference>
<dbReference type="FunFam" id="3.40.50.300:FF:000120">
    <property type="entry name" value="ATP-dependent chaperone ClpB"/>
    <property type="match status" value="1"/>
</dbReference>
<dbReference type="FunFam" id="3.40.50.300:FF:000025">
    <property type="entry name" value="ATP-dependent Clp protease subunit"/>
    <property type="match status" value="1"/>
</dbReference>
<dbReference type="FunFam" id="3.40.50.300:FF:000010">
    <property type="entry name" value="Chaperone clpB 1, putative"/>
    <property type="match status" value="1"/>
</dbReference>
<dbReference type="Gene3D" id="1.10.8.60">
    <property type="match status" value="1"/>
</dbReference>
<dbReference type="Gene3D" id="1.10.1780.10">
    <property type="entry name" value="Clp, N-terminal domain"/>
    <property type="match status" value="1"/>
</dbReference>
<dbReference type="Gene3D" id="3.40.50.300">
    <property type="entry name" value="P-loop containing nucleotide triphosphate hydrolases"/>
    <property type="match status" value="3"/>
</dbReference>
<dbReference type="InterPro" id="IPR003593">
    <property type="entry name" value="AAA+_ATPase"/>
</dbReference>
<dbReference type="InterPro" id="IPR003959">
    <property type="entry name" value="ATPase_AAA_core"/>
</dbReference>
<dbReference type="InterPro" id="IPR017730">
    <property type="entry name" value="Chaperonin_ClpB"/>
</dbReference>
<dbReference type="InterPro" id="IPR019489">
    <property type="entry name" value="Clp_ATPase_C"/>
</dbReference>
<dbReference type="InterPro" id="IPR036628">
    <property type="entry name" value="Clp_N_dom_sf"/>
</dbReference>
<dbReference type="InterPro" id="IPR004176">
    <property type="entry name" value="Clp_R_dom"/>
</dbReference>
<dbReference type="InterPro" id="IPR001270">
    <property type="entry name" value="ClpA/B"/>
</dbReference>
<dbReference type="InterPro" id="IPR018368">
    <property type="entry name" value="ClpA/B_CS1"/>
</dbReference>
<dbReference type="InterPro" id="IPR028299">
    <property type="entry name" value="ClpA/B_CS2"/>
</dbReference>
<dbReference type="InterPro" id="IPR041546">
    <property type="entry name" value="ClpA/ClpB_AAA_lid"/>
</dbReference>
<dbReference type="InterPro" id="IPR050130">
    <property type="entry name" value="ClpA_ClpB"/>
</dbReference>
<dbReference type="InterPro" id="IPR027417">
    <property type="entry name" value="P-loop_NTPase"/>
</dbReference>
<dbReference type="NCBIfam" id="TIGR03346">
    <property type="entry name" value="chaperone_ClpB"/>
    <property type="match status" value="1"/>
</dbReference>
<dbReference type="PANTHER" id="PTHR11638">
    <property type="entry name" value="ATP-DEPENDENT CLP PROTEASE"/>
    <property type="match status" value="1"/>
</dbReference>
<dbReference type="PANTHER" id="PTHR11638:SF18">
    <property type="entry name" value="HEAT SHOCK PROTEIN 104"/>
    <property type="match status" value="1"/>
</dbReference>
<dbReference type="Pfam" id="PF00004">
    <property type="entry name" value="AAA"/>
    <property type="match status" value="1"/>
</dbReference>
<dbReference type="Pfam" id="PF07724">
    <property type="entry name" value="AAA_2"/>
    <property type="match status" value="1"/>
</dbReference>
<dbReference type="Pfam" id="PF17871">
    <property type="entry name" value="AAA_lid_9"/>
    <property type="match status" value="1"/>
</dbReference>
<dbReference type="Pfam" id="PF02861">
    <property type="entry name" value="Clp_N"/>
    <property type="match status" value="2"/>
</dbReference>
<dbReference type="Pfam" id="PF10431">
    <property type="entry name" value="ClpB_D2-small"/>
    <property type="match status" value="1"/>
</dbReference>
<dbReference type="PRINTS" id="PR00300">
    <property type="entry name" value="CLPPROTEASEA"/>
</dbReference>
<dbReference type="SMART" id="SM00382">
    <property type="entry name" value="AAA"/>
    <property type="match status" value="2"/>
</dbReference>
<dbReference type="SMART" id="SM01086">
    <property type="entry name" value="ClpB_D2-small"/>
    <property type="match status" value="1"/>
</dbReference>
<dbReference type="SUPFAM" id="SSF81923">
    <property type="entry name" value="Double Clp-N motif"/>
    <property type="match status" value="1"/>
</dbReference>
<dbReference type="SUPFAM" id="SSF52540">
    <property type="entry name" value="P-loop containing nucleoside triphosphate hydrolases"/>
    <property type="match status" value="2"/>
</dbReference>
<dbReference type="PROSITE" id="PS51903">
    <property type="entry name" value="CLP_R"/>
    <property type="match status" value="1"/>
</dbReference>
<dbReference type="PROSITE" id="PS00870">
    <property type="entry name" value="CLPAB_1"/>
    <property type="match status" value="1"/>
</dbReference>
<dbReference type="PROSITE" id="PS00871">
    <property type="entry name" value="CLPAB_2"/>
    <property type="match status" value="1"/>
</dbReference>
<keyword id="KW-0067">ATP-binding</keyword>
<keyword id="KW-0143">Chaperone</keyword>
<keyword id="KW-0175">Coiled coil</keyword>
<keyword id="KW-0963">Cytoplasm</keyword>
<keyword id="KW-0547">Nucleotide-binding</keyword>
<keyword id="KW-0677">Repeat</keyword>
<keyword id="KW-0346">Stress response</keyword>
<accession>Q7U637</accession>
<sequence length="862" mass="95612">MQPTAEQFTEQAWAAIVAAQQLAQASRHQQLETEHLLLALLRQNGLAGRILSKTGVDVTTFEASVEGHLQRLPSLGSAPDSVFLGRSLNKALDRAEQRRDGFGDSFIAIEHLLLALAEDDRCGRQLLSQAGVTTNTLKEAITAVRGNQTVTDQNPEATYESLAKYGRDLTAAARDGQLDPVIGRDEEIRRTIQILSRRTKNNPVLIGEPGVGKTAIVEGLAQRIVNGDVPQALQNRQLITLDMGALIAGAKYRGEFEERLKAVLKEVTTSDGQIVLFIDEIHTVVGAGASGGAMDASNLLKPMLARGELRCIGATTLDEHRQHIEKDPALERRFQQVLVDQPTVPDTISILRGLKERYEVHHGVRIADSALVAAAMLSSRYITDRFLPDKAIDLVDESAARLKMEITSKPEQIDEIDRKILQLEMEKLSLGRESDSASQERLQRIERELAELGEQQSSLNAQWQSEKGAIDQLSALKEEIERVQLQVEQAKRNYDLNKAAELEYGTLATLQRQLQEQEDLLEDEDGTDKTLLREEVTEDDIAEVIAKWTGIPVARLVQSEMEKLLQLEDDLHQRVIGQNQAVTAVADAIQRSRAGLSDPNRPIASFLFLGPTGVGKTELSKALANRLFDSDDAMVRIDMSEYMEKHTVSRLIGAPPGYVGYEAGGQLTEAVRRRPYAVILFDEVEKAHPDVFNVMLQILDDGRVTDGQGRTVDFTNTVLILTSNIGSQSILELAGDPEQHTAMEQRVNEALKAKFRPEFLNRLDDQIIFRSLEKEELRRIVSLQVERLRSRLEQRKLDLQLSDIAADWLATIGFDPVYGARPLKRAIQRELETPIAKAILAGQLSEGQTVQVDAGDDKLSIS</sequence>
<gene>
    <name type="primary">clpB1</name>
    <name type="ordered locus">SYNW1503</name>
</gene>
<feature type="chain" id="PRO_0000191190" description="Chaperone protein ClpB 1">
    <location>
        <begin position="1"/>
        <end position="862"/>
    </location>
</feature>
<feature type="domain" description="Clp R" evidence="2">
    <location>
        <begin position="5"/>
        <end position="147"/>
    </location>
</feature>
<feature type="region of interest" description="Repeat 1" evidence="2">
    <location>
        <begin position="8"/>
        <end position="72"/>
    </location>
</feature>
<feature type="region of interest" description="Repeat 2" evidence="2">
    <location>
        <begin position="84"/>
        <end position="147"/>
    </location>
</feature>
<feature type="region of interest" description="NBD1" evidence="1">
    <location>
        <begin position="160"/>
        <end position="341"/>
    </location>
</feature>
<feature type="region of interest" description="Linker" evidence="1">
    <location>
        <begin position="342"/>
        <end position="550"/>
    </location>
</feature>
<feature type="region of interest" description="NBD2" evidence="1">
    <location>
        <begin position="560"/>
        <end position="771"/>
    </location>
</feature>
<feature type="region of interest" description="C-terminal" evidence="1">
    <location>
        <begin position="772"/>
        <end position="862"/>
    </location>
</feature>
<feature type="coiled-coil region" evidence="1">
    <location>
        <begin position="392"/>
        <end position="526"/>
    </location>
</feature>
<feature type="binding site" evidence="1">
    <location>
        <begin position="207"/>
        <end position="214"/>
    </location>
    <ligand>
        <name>ATP</name>
        <dbReference type="ChEBI" id="CHEBI:30616"/>
        <label>1</label>
    </ligand>
</feature>
<feature type="binding site" evidence="1">
    <location>
        <begin position="610"/>
        <end position="617"/>
    </location>
    <ligand>
        <name>ATP</name>
        <dbReference type="ChEBI" id="CHEBI:30616"/>
        <label>2</label>
    </ligand>
</feature>
<protein>
    <recommendedName>
        <fullName>Chaperone protein ClpB 1</fullName>
    </recommendedName>
</protein>
<evidence type="ECO:0000250" key="1"/>
<evidence type="ECO:0000255" key="2">
    <source>
        <dbReference type="PROSITE-ProRule" id="PRU01251"/>
    </source>
</evidence>
<evidence type="ECO:0000305" key="3"/>
<comment type="function">
    <text evidence="1">Part of a stress-induced multi-chaperone system, it is involved in the recovery of the cell from heat-induced damage, in cooperation with DnaK, DnaJ and GrpE. Acts before DnaK, in the processing of protein aggregates. Protein binding stimulates the ATPase activity; ATP hydrolysis unfolds the denatured protein aggregates, which probably helps expose new hydrophobic binding sites on the surface of ClpB-bound aggregates, contributing to the solubilization and refolding of denatured protein aggregates by DnaK (By similarity).</text>
</comment>
<comment type="subunit">
    <text evidence="1">Homohexamer. The oligomerization is ATP-dependent (By similarity).</text>
</comment>
<comment type="subcellular location">
    <subcellularLocation>
        <location evidence="3">Cytoplasm</location>
    </subcellularLocation>
</comment>
<comment type="domain">
    <text evidence="1">The Clp repeat (R) domain probably functions as a substrate-discriminating domain, recruiting aggregated proteins to the ClpB hexamer and/or stabilizing bound proteins. The NBD2 domain is responsible for oligomerization, whereas the NBD1 domain stabilizes the hexamer probably in an ATP-dependent manner. The movement of the coiled-coil domain is essential for ClpB ability to rescue proteins from an aggregated state, probably by pulling apart large aggregated proteins, which are bound between the coiled-coils motifs of adjacent ClpB subunits in the functional hexamer (By similarity).</text>
</comment>
<comment type="similarity">
    <text evidence="3">Belongs to the ClpA/ClpB family.</text>
</comment>
<comment type="sequence caution" evidence="3">
    <conflict type="erroneous initiation">
        <sequence resource="EMBL-CDS" id="CAE08018"/>
    </conflict>
</comment>
<reference key="1">
    <citation type="journal article" date="2003" name="Nature">
        <title>The genome of a motile marine Synechococcus.</title>
        <authorList>
            <person name="Palenik B."/>
            <person name="Brahamsha B."/>
            <person name="Larimer F.W."/>
            <person name="Land M.L."/>
            <person name="Hauser L."/>
            <person name="Chain P."/>
            <person name="Lamerdin J.E."/>
            <person name="Regala W."/>
            <person name="Allen E.E."/>
            <person name="McCarren J."/>
            <person name="Paulsen I.T."/>
            <person name="Dufresne A."/>
            <person name="Partensky F."/>
            <person name="Webb E.A."/>
            <person name="Waterbury J."/>
        </authorList>
    </citation>
    <scope>NUCLEOTIDE SEQUENCE [LARGE SCALE GENOMIC DNA]</scope>
    <source>
        <strain>WH8102</strain>
    </source>
</reference>
<name>CLPB1_PARMW</name>
<proteinExistence type="inferred from homology"/>